<proteinExistence type="inferred from homology"/>
<accession>Q6SW43</accession>
<accession>D2K3Q7</accession>
<organismHost>
    <name type="scientific">Homo sapiens</name>
    <name type="common">Human</name>
    <dbReference type="NCBI Taxonomy" id="9606"/>
</organismHost>
<sequence>MAPSHVDKVNTRTWSASIVFMVLTFVNVSVHLVLSNFPHLGYPCVYYHVVDFERLNMSAYNVMHLHTPMLFLDSVQLVCYAVFMQLVFLAVTIYYLVCWIKISMRKDKGMSLNQSTRDISYMGDSLTAFLFILSMDTFQLFTLTMSFRLPSMIAFMAAVHFFCLTIFNVSMVTQYRSYKRSLFFFSRLHPKLKGTVQFRTLIVNLVEVALGFNTTVVAMALCYGFGNNFFVRTGHMVLAVFVVYAIISIIYFLLIEAVFFQYVKVQFGYHLGAFFGLCGLIYPIVQYDTFLSNEYRTGISWSFGMLFFIWAMFTTCRAVRYFRGRGSGSVKYQALATASGEEVAALSHHDSLESRRLREEEDDDDEDFEDA</sequence>
<evidence type="ECO:0000255" key="1">
    <source>
        <dbReference type="HAMAP-Rule" id="MF_04035"/>
    </source>
</evidence>
<evidence type="ECO:0000256" key="2">
    <source>
        <dbReference type="SAM" id="MobiDB-lite"/>
    </source>
</evidence>
<organism>
    <name type="scientific">Human cytomegalovirus (strain Merlin)</name>
    <name type="common">HHV-5</name>
    <name type="synonym">Human herpesvirus 5</name>
    <dbReference type="NCBI Taxonomy" id="295027"/>
    <lineage>
        <taxon>Viruses</taxon>
        <taxon>Duplodnaviria</taxon>
        <taxon>Heunggongvirae</taxon>
        <taxon>Peploviricota</taxon>
        <taxon>Herviviricetes</taxon>
        <taxon>Herpesvirales</taxon>
        <taxon>Orthoherpesviridae</taxon>
        <taxon>Betaherpesvirinae</taxon>
        <taxon>Cytomegalovirus</taxon>
        <taxon>Cytomegalovirus humanbeta5</taxon>
        <taxon>Human cytomegalovirus</taxon>
    </lineage>
</organism>
<keyword id="KW-1015">Disulfide bond</keyword>
<keyword id="KW-0325">Glycoprotein</keyword>
<keyword id="KW-1039">Host endosome</keyword>
<keyword id="KW-1040">Host Golgi apparatus</keyword>
<keyword id="KW-1043">Host membrane</keyword>
<keyword id="KW-1048">Host nucleus</keyword>
<keyword id="KW-0472">Membrane</keyword>
<keyword id="KW-1185">Reference proteome</keyword>
<keyword id="KW-0812">Transmembrane</keyword>
<keyword id="KW-1133">Transmembrane helix</keyword>
<keyword id="KW-0261">Viral envelope protein</keyword>
<keyword id="KW-0946">Virion</keyword>
<comment type="function">
    <text evidence="1">Envelope glycoprotein important for virion assembly and egress. Plays a role in the correct incorporation of gH-gL into virion membrane. Directs the glycoprotein N (gN) to the host trans-Golgi network.</text>
</comment>
<comment type="subunit">
    <text evidence="1">Interacts (via N-terminus) with gN (via N-terminus). The gM-gN heterodimer forms the gCII complex.</text>
</comment>
<comment type="subcellular location">
    <subcellularLocation>
        <location evidence="1">Virion membrane</location>
        <topology evidence="1">Multi-pass membrane protein</topology>
    </subcellularLocation>
    <subcellularLocation>
        <location evidence="1">Host Golgi apparatus</location>
        <location evidence="1">Host trans-Golgi network</location>
    </subcellularLocation>
    <subcellularLocation>
        <location evidence="1">Host endosome membrane</location>
        <topology evidence="1">Multi-pass membrane protein</topology>
    </subcellularLocation>
    <subcellularLocation>
        <location evidence="1">Host nucleus inner membrane</location>
        <topology evidence="1">Multi-pass membrane protein</topology>
    </subcellularLocation>
    <text evidence="1">During virion morphogenesis, this protein accumulates in the trans-Golgi network where secondary envelopment occurs.</text>
</comment>
<comment type="similarity">
    <text evidence="1">Belongs to the herpesviridae glycoprotein M family.</text>
</comment>
<dbReference type="EMBL" id="AY446894">
    <property type="protein sequence ID" value="AAR31651.1"/>
    <property type="molecule type" value="Genomic_DNA"/>
</dbReference>
<dbReference type="RefSeq" id="YP_081547.1">
    <property type="nucleotide sequence ID" value="NC_006273.2"/>
</dbReference>
<dbReference type="SMR" id="Q6SW43"/>
<dbReference type="DNASU" id="3077534"/>
<dbReference type="GeneID" id="3077534"/>
<dbReference type="KEGG" id="vg:3077534"/>
<dbReference type="Reactome" id="R-HSA-9609690">
    <property type="pathway name" value="HCMV Early Events"/>
</dbReference>
<dbReference type="Reactome" id="R-HSA-9610379">
    <property type="pathway name" value="HCMV Late Events"/>
</dbReference>
<dbReference type="Proteomes" id="UP000000938">
    <property type="component" value="Segment"/>
</dbReference>
<dbReference type="GO" id="GO:0044175">
    <property type="term" value="C:host cell endosome membrane"/>
    <property type="evidence" value="ECO:0007669"/>
    <property type="project" value="UniProtKB-SubCell"/>
</dbReference>
<dbReference type="GO" id="GO:0044177">
    <property type="term" value="C:host cell Golgi apparatus"/>
    <property type="evidence" value="ECO:0007669"/>
    <property type="project" value="UniProtKB-SubCell"/>
</dbReference>
<dbReference type="GO" id="GO:0044201">
    <property type="term" value="C:host cell nuclear inner membrane"/>
    <property type="evidence" value="ECO:0007669"/>
    <property type="project" value="UniProtKB-SubCell"/>
</dbReference>
<dbReference type="GO" id="GO:0005886">
    <property type="term" value="C:plasma membrane"/>
    <property type="evidence" value="ECO:0000304"/>
    <property type="project" value="Reactome"/>
</dbReference>
<dbReference type="GO" id="GO:0019031">
    <property type="term" value="C:viral envelope"/>
    <property type="evidence" value="ECO:0000304"/>
    <property type="project" value="Reactome"/>
</dbReference>
<dbReference type="GO" id="GO:0055036">
    <property type="term" value="C:virion membrane"/>
    <property type="evidence" value="ECO:0007669"/>
    <property type="project" value="UniProtKB-SubCell"/>
</dbReference>
<dbReference type="HAMAP" id="MF_04035">
    <property type="entry name" value="HSV_GM"/>
    <property type="match status" value="1"/>
</dbReference>
<dbReference type="InterPro" id="IPR000785">
    <property type="entry name" value="Herpes_glycop_M"/>
</dbReference>
<dbReference type="Pfam" id="PF01528">
    <property type="entry name" value="Herpes_glycop"/>
    <property type="match status" value="1"/>
</dbReference>
<dbReference type="PRINTS" id="PR00333">
    <property type="entry name" value="HSVINTEGRLMP"/>
</dbReference>
<feature type="chain" id="PRO_0000417830" description="Envelope glycoprotein M">
    <location>
        <begin position="1"/>
        <end position="371"/>
    </location>
</feature>
<feature type="topological domain" description="Intravirion" evidence="1">
    <location>
        <begin position="1"/>
        <end position="13"/>
    </location>
</feature>
<feature type="transmembrane region" description="Helical" evidence="1">
    <location>
        <begin position="14"/>
        <end position="34"/>
    </location>
</feature>
<feature type="topological domain" description="Virion surface" evidence="1">
    <location>
        <begin position="35"/>
        <end position="79"/>
    </location>
</feature>
<feature type="transmembrane region" description="Helical" evidence="1">
    <location>
        <begin position="80"/>
        <end position="100"/>
    </location>
</feature>
<feature type="topological domain" description="Intravirion" evidence="1">
    <location>
        <begin position="101"/>
        <end position="126"/>
    </location>
</feature>
<feature type="transmembrane region" description="Helical" evidence="1">
    <location>
        <begin position="127"/>
        <end position="147"/>
    </location>
</feature>
<feature type="topological domain" description="Virion surface" evidence="1">
    <location>
        <begin position="148"/>
        <end position="151"/>
    </location>
</feature>
<feature type="transmembrane region" description="Helical" evidence="1">
    <location>
        <begin position="152"/>
        <end position="172"/>
    </location>
</feature>
<feature type="topological domain" description="Intravirion" evidence="1">
    <location>
        <begin position="173"/>
        <end position="200"/>
    </location>
</feature>
<feature type="transmembrane region" description="Helical" evidence="1">
    <location>
        <begin position="201"/>
        <end position="221"/>
    </location>
</feature>
<feature type="topological domain" description="Virion surface" evidence="1">
    <location>
        <begin position="222"/>
        <end position="239"/>
    </location>
</feature>
<feature type="transmembrane region" description="Helical" evidence="1">
    <location>
        <begin position="240"/>
        <end position="260"/>
    </location>
</feature>
<feature type="topological domain" description="Intravirion" evidence="1">
    <location>
        <begin position="261"/>
        <end position="264"/>
    </location>
</feature>
<feature type="transmembrane region" description="Helical" evidence="1">
    <location>
        <begin position="265"/>
        <end position="285"/>
    </location>
</feature>
<feature type="topological domain" description="Virion surface" evidence="1">
    <location>
        <begin position="286"/>
        <end position="298"/>
    </location>
</feature>
<feature type="transmembrane region" description="Helical" evidence="1">
    <location>
        <begin position="299"/>
        <end position="319"/>
    </location>
</feature>
<feature type="topological domain" description="Intravirion" evidence="1">
    <location>
        <begin position="320"/>
        <end position="371"/>
    </location>
</feature>
<feature type="region of interest" description="Disordered" evidence="2">
    <location>
        <begin position="346"/>
        <end position="371"/>
    </location>
</feature>
<feature type="compositionally biased region" description="Basic and acidic residues" evidence="2">
    <location>
        <begin position="347"/>
        <end position="359"/>
    </location>
</feature>
<feature type="compositionally biased region" description="Acidic residues" evidence="2">
    <location>
        <begin position="360"/>
        <end position="371"/>
    </location>
</feature>
<feature type="disulfide bond" description="Interchain (with gN)" evidence="1">
    <location>
        <position position="44"/>
    </location>
</feature>
<name>GM_HCMVM</name>
<gene>
    <name evidence="1" type="primary">gM</name>
    <name type="ORF">UL100</name>
</gene>
<reference key="1">
    <citation type="journal article" date="2004" name="J. Gen. Virol.">
        <title>Genetic content of wild-type human cytomegalovirus.</title>
        <authorList>
            <person name="Dolan A."/>
            <person name="Cunningham C."/>
            <person name="Hector R.D."/>
            <person name="Hassan-Walker A.F."/>
            <person name="Lee L."/>
            <person name="Addison C."/>
            <person name="Dargan D.J."/>
            <person name="McGeoch D.J."/>
            <person name="Gatherer D."/>
            <person name="Emery V.C."/>
            <person name="Griffiths P.D."/>
            <person name="Sinzger C."/>
            <person name="McSharry B.P."/>
            <person name="Wilkinson G.W.G."/>
            <person name="Davison A.J."/>
        </authorList>
    </citation>
    <scope>NUCLEOTIDE SEQUENCE [LARGE SCALE GENOMIC DNA]</scope>
</reference>
<protein>
    <recommendedName>
        <fullName evidence="1">Envelope glycoprotein M</fullName>
        <shortName evidence="1">gM</shortName>
    </recommendedName>
</protein>